<name>RPOA_RALN1</name>
<protein>
    <recommendedName>
        <fullName evidence="1">DNA-directed RNA polymerase subunit alpha</fullName>
        <shortName evidence="1">RNAP subunit alpha</shortName>
        <ecNumber evidence="1">2.7.7.6</ecNumber>
    </recommendedName>
    <alternativeName>
        <fullName evidence="1">RNA polymerase subunit alpha</fullName>
    </alternativeName>
    <alternativeName>
        <fullName evidence="1">Transcriptase subunit alpha</fullName>
    </alternativeName>
</protein>
<dbReference type="EC" id="2.7.7.6" evidence="1"/>
<dbReference type="EMBL" id="AL646052">
    <property type="protein sequence ID" value="CAD16702.1"/>
    <property type="molecule type" value="Genomic_DNA"/>
</dbReference>
<dbReference type="RefSeq" id="WP_011002898.1">
    <property type="nucleotide sequence ID" value="NC_003295.1"/>
</dbReference>
<dbReference type="SMR" id="Q8XV38"/>
<dbReference type="STRING" id="267608.RSc2993"/>
<dbReference type="EnsemblBacteria" id="CAD16702">
    <property type="protein sequence ID" value="CAD16702"/>
    <property type="gene ID" value="RSc2993"/>
</dbReference>
<dbReference type="KEGG" id="rso:RSc2993"/>
<dbReference type="eggNOG" id="COG0202">
    <property type="taxonomic scope" value="Bacteria"/>
</dbReference>
<dbReference type="HOGENOM" id="CLU_053084_0_0_4"/>
<dbReference type="Proteomes" id="UP000001436">
    <property type="component" value="Chromosome"/>
</dbReference>
<dbReference type="GO" id="GO:0005737">
    <property type="term" value="C:cytoplasm"/>
    <property type="evidence" value="ECO:0007669"/>
    <property type="project" value="UniProtKB-ARBA"/>
</dbReference>
<dbReference type="GO" id="GO:0000428">
    <property type="term" value="C:DNA-directed RNA polymerase complex"/>
    <property type="evidence" value="ECO:0007669"/>
    <property type="project" value="UniProtKB-KW"/>
</dbReference>
<dbReference type="GO" id="GO:0003677">
    <property type="term" value="F:DNA binding"/>
    <property type="evidence" value="ECO:0007669"/>
    <property type="project" value="UniProtKB-UniRule"/>
</dbReference>
<dbReference type="GO" id="GO:0003899">
    <property type="term" value="F:DNA-directed RNA polymerase activity"/>
    <property type="evidence" value="ECO:0007669"/>
    <property type="project" value="UniProtKB-UniRule"/>
</dbReference>
<dbReference type="GO" id="GO:0046983">
    <property type="term" value="F:protein dimerization activity"/>
    <property type="evidence" value="ECO:0007669"/>
    <property type="project" value="InterPro"/>
</dbReference>
<dbReference type="GO" id="GO:0006351">
    <property type="term" value="P:DNA-templated transcription"/>
    <property type="evidence" value="ECO:0007669"/>
    <property type="project" value="UniProtKB-UniRule"/>
</dbReference>
<dbReference type="CDD" id="cd06928">
    <property type="entry name" value="RNAP_alpha_NTD"/>
    <property type="match status" value="1"/>
</dbReference>
<dbReference type="FunFam" id="1.10.150.20:FF:000001">
    <property type="entry name" value="DNA-directed RNA polymerase subunit alpha"/>
    <property type="match status" value="1"/>
</dbReference>
<dbReference type="FunFam" id="2.170.120.12:FF:000001">
    <property type="entry name" value="DNA-directed RNA polymerase subunit alpha"/>
    <property type="match status" value="1"/>
</dbReference>
<dbReference type="Gene3D" id="1.10.150.20">
    <property type="entry name" value="5' to 3' exonuclease, C-terminal subdomain"/>
    <property type="match status" value="1"/>
</dbReference>
<dbReference type="Gene3D" id="2.170.120.12">
    <property type="entry name" value="DNA-directed RNA polymerase, insert domain"/>
    <property type="match status" value="1"/>
</dbReference>
<dbReference type="Gene3D" id="3.30.1360.10">
    <property type="entry name" value="RNA polymerase, RBP11-like subunit"/>
    <property type="match status" value="1"/>
</dbReference>
<dbReference type="HAMAP" id="MF_00059">
    <property type="entry name" value="RNApol_bact_RpoA"/>
    <property type="match status" value="1"/>
</dbReference>
<dbReference type="InterPro" id="IPR011262">
    <property type="entry name" value="DNA-dir_RNA_pol_insert"/>
</dbReference>
<dbReference type="InterPro" id="IPR011263">
    <property type="entry name" value="DNA-dir_RNA_pol_RpoA/D/Rpb3"/>
</dbReference>
<dbReference type="InterPro" id="IPR011773">
    <property type="entry name" value="DNA-dir_RpoA"/>
</dbReference>
<dbReference type="InterPro" id="IPR036603">
    <property type="entry name" value="RBP11-like"/>
</dbReference>
<dbReference type="InterPro" id="IPR011260">
    <property type="entry name" value="RNAP_asu_C"/>
</dbReference>
<dbReference type="InterPro" id="IPR036643">
    <property type="entry name" value="RNApol_insert_sf"/>
</dbReference>
<dbReference type="NCBIfam" id="NF003513">
    <property type="entry name" value="PRK05182.1-2"/>
    <property type="match status" value="1"/>
</dbReference>
<dbReference type="NCBIfam" id="NF003519">
    <property type="entry name" value="PRK05182.2-5"/>
    <property type="match status" value="1"/>
</dbReference>
<dbReference type="NCBIfam" id="TIGR02027">
    <property type="entry name" value="rpoA"/>
    <property type="match status" value="1"/>
</dbReference>
<dbReference type="Pfam" id="PF01000">
    <property type="entry name" value="RNA_pol_A_bac"/>
    <property type="match status" value="1"/>
</dbReference>
<dbReference type="Pfam" id="PF03118">
    <property type="entry name" value="RNA_pol_A_CTD"/>
    <property type="match status" value="1"/>
</dbReference>
<dbReference type="Pfam" id="PF01193">
    <property type="entry name" value="RNA_pol_L"/>
    <property type="match status" value="1"/>
</dbReference>
<dbReference type="SMART" id="SM00662">
    <property type="entry name" value="RPOLD"/>
    <property type="match status" value="1"/>
</dbReference>
<dbReference type="SUPFAM" id="SSF47789">
    <property type="entry name" value="C-terminal domain of RNA polymerase alpha subunit"/>
    <property type="match status" value="1"/>
</dbReference>
<dbReference type="SUPFAM" id="SSF56553">
    <property type="entry name" value="Insert subdomain of RNA polymerase alpha subunit"/>
    <property type="match status" value="1"/>
</dbReference>
<dbReference type="SUPFAM" id="SSF55257">
    <property type="entry name" value="RBP11-like subunits of RNA polymerase"/>
    <property type="match status" value="1"/>
</dbReference>
<feature type="chain" id="PRO_0000175363" description="DNA-directed RNA polymerase subunit alpha">
    <location>
        <begin position="1"/>
        <end position="326"/>
    </location>
</feature>
<feature type="region of interest" description="Alpha N-terminal domain (alpha-NTD)" evidence="1">
    <location>
        <begin position="1"/>
        <end position="231"/>
    </location>
</feature>
<feature type="region of interest" description="Alpha C-terminal domain (alpha-CTD)" evidence="1">
    <location>
        <begin position="247"/>
        <end position="326"/>
    </location>
</feature>
<comment type="function">
    <text evidence="1">DNA-dependent RNA polymerase catalyzes the transcription of DNA into RNA using the four ribonucleoside triphosphates as substrates.</text>
</comment>
<comment type="catalytic activity">
    <reaction evidence="1">
        <text>RNA(n) + a ribonucleoside 5'-triphosphate = RNA(n+1) + diphosphate</text>
        <dbReference type="Rhea" id="RHEA:21248"/>
        <dbReference type="Rhea" id="RHEA-COMP:14527"/>
        <dbReference type="Rhea" id="RHEA-COMP:17342"/>
        <dbReference type="ChEBI" id="CHEBI:33019"/>
        <dbReference type="ChEBI" id="CHEBI:61557"/>
        <dbReference type="ChEBI" id="CHEBI:140395"/>
        <dbReference type="EC" id="2.7.7.6"/>
    </reaction>
</comment>
<comment type="subunit">
    <text evidence="1">Homodimer. The RNAP catalytic core consists of 2 alpha, 1 beta, 1 beta' and 1 omega subunit. When a sigma factor is associated with the core the holoenzyme is formed, which can initiate transcription.</text>
</comment>
<comment type="domain">
    <text evidence="1">The N-terminal domain is essential for RNAP assembly and basal transcription, whereas the C-terminal domain is involved in interaction with transcriptional regulators and with upstream promoter elements.</text>
</comment>
<comment type="similarity">
    <text evidence="1">Belongs to the RNA polymerase alpha chain family.</text>
</comment>
<gene>
    <name evidence="1" type="primary">rpoA</name>
    <name type="ordered locus">RSc2993</name>
    <name type="ORF">RS01122</name>
</gene>
<organism>
    <name type="scientific">Ralstonia nicotianae (strain ATCC BAA-1114 / GMI1000)</name>
    <name type="common">Ralstonia solanacearum</name>
    <dbReference type="NCBI Taxonomy" id="267608"/>
    <lineage>
        <taxon>Bacteria</taxon>
        <taxon>Pseudomonadati</taxon>
        <taxon>Pseudomonadota</taxon>
        <taxon>Betaproteobacteria</taxon>
        <taxon>Burkholderiales</taxon>
        <taxon>Burkholderiaceae</taxon>
        <taxon>Ralstonia</taxon>
        <taxon>Ralstonia solanacearum species complex</taxon>
    </lineage>
</organism>
<reference key="1">
    <citation type="journal article" date="2002" name="Nature">
        <title>Genome sequence of the plant pathogen Ralstonia solanacearum.</title>
        <authorList>
            <person name="Salanoubat M."/>
            <person name="Genin S."/>
            <person name="Artiguenave F."/>
            <person name="Gouzy J."/>
            <person name="Mangenot S."/>
            <person name="Arlat M."/>
            <person name="Billault A."/>
            <person name="Brottier P."/>
            <person name="Camus J.-C."/>
            <person name="Cattolico L."/>
            <person name="Chandler M."/>
            <person name="Choisne N."/>
            <person name="Claudel-Renard C."/>
            <person name="Cunnac S."/>
            <person name="Demange N."/>
            <person name="Gaspin C."/>
            <person name="Lavie M."/>
            <person name="Moisan A."/>
            <person name="Robert C."/>
            <person name="Saurin W."/>
            <person name="Schiex T."/>
            <person name="Siguier P."/>
            <person name="Thebault P."/>
            <person name="Whalen M."/>
            <person name="Wincker P."/>
            <person name="Levy M."/>
            <person name="Weissenbach J."/>
            <person name="Boucher C.A."/>
        </authorList>
    </citation>
    <scope>NUCLEOTIDE SEQUENCE [LARGE SCALE GENOMIC DNA]</scope>
    <source>
        <strain>ATCC BAA-1114 / GMI1000</strain>
    </source>
</reference>
<sequence length="326" mass="35532">MQTALLKPKIIAVEPLGDHHAKVVMEPFERGYGHTLGNALRRVLLSSMVGYAPTEVTIAGVVHEYSTIDGVQEDVVNLLLNLKGVVFKLHNRDEVTVSLRKEGEGVVTAADIELPHDVEIINPGHVIASLSAGGKLDMQIKVEQGRGYVPGNVRKFGDESSKVIGRIVLDASFAPVRRVSYAVESARVEQRTDLDKLVMNIETNGVISPEEAIRQSARILVDQLSVFAALEGTESAAEAAAARAPQIDPILLRPVDDLELTVRSANCLKAENIYYIGDLIQRTENELLKTPNLGRKSLNEIKEVLASRGLTLGMKLENWPPAGLEK</sequence>
<accession>Q8XV38</accession>
<keyword id="KW-0240">DNA-directed RNA polymerase</keyword>
<keyword id="KW-0548">Nucleotidyltransferase</keyword>
<keyword id="KW-1185">Reference proteome</keyword>
<keyword id="KW-0804">Transcription</keyword>
<keyword id="KW-0808">Transferase</keyword>
<proteinExistence type="inferred from homology"/>
<evidence type="ECO:0000255" key="1">
    <source>
        <dbReference type="HAMAP-Rule" id="MF_00059"/>
    </source>
</evidence>